<keyword id="KW-0687">Ribonucleoprotein</keyword>
<keyword id="KW-0689">Ribosomal protein</keyword>
<gene>
    <name evidence="1" type="primary">rpmI</name>
    <name type="ordered locus">LGAS_1408</name>
</gene>
<sequence>MPKQKTHRASAKRFKRTANGGLKRHHAYTGHRFHGKTKKQRRHLRKAAMVSASDLKRIKQMLSQMR</sequence>
<feature type="chain" id="PRO_1000050705" description="Large ribosomal subunit protein bL35">
    <location>
        <begin position="1"/>
        <end position="66"/>
    </location>
</feature>
<feature type="region of interest" description="Disordered" evidence="2">
    <location>
        <begin position="1"/>
        <end position="42"/>
    </location>
</feature>
<name>RL35_LACGA</name>
<accession>Q041V2</accession>
<proteinExistence type="inferred from homology"/>
<comment type="similarity">
    <text evidence="1">Belongs to the bacterial ribosomal protein bL35 family.</text>
</comment>
<dbReference type="EMBL" id="CP000413">
    <property type="protein sequence ID" value="ABJ60770.1"/>
    <property type="molecule type" value="Genomic_DNA"/>
</dbReference>
<dbReference type="RefSeq" id="WP_003646917.1">
    <property type="nucleotide sequence ID" value="NZ_WBMG01000003.1"/>
</dbReference>
<dbReference type="SMR" id="Q041V2"/>
<dbReference type="GeneID" id="83570838"/>
<dbReference type="KEGG" id="lga:LGAS_1408"/>
<dbReference type="HOGENOM" id="CLU_169643_3_1_9"/>
<dbReference type="BioCyc" id="LGAS324831:G1G6Y-1402-MONOMER"/>
<dbReference type="Proteomes" id="UP000000664">
    <property type="component" value="Chromosome"/>
</dbReference>
<dbReference type="GO" id="GO:0022625">
    <property type="term" value="C:cytosolic large ribosomal subunit"/>
    <property type="evidence" value="ECO:0007669"/>
    <property type="project" value="TreeGrafter"/>
</dbReference>
<dbReference type="GO" id="GO:0003735">
    <property type="term" value="F:structural constituent of ribosome"/>
    <property type="evidence" value="ECO:0007669"/>
    <property type="project" value="InterPro"/>
</dbReference>
<dbReference type="GO" id="GO:0006412">
    <property type="term" value="P:translation"/>
    <property type="evidence" value="ECO:0007669"/>
    <property type="project" value="UniProtKB-UniRule"/>
</dbReference>
<dbReference type="FunFam" id="4.10.410.60:FF:000001">
    <property type="entry name" value="50S ribosomal protein L35"/>
    <property type="match status" value="1"/>
</dbReference>
<dbReference type="Gene3D" id="4.10.410.60">
    <property type="match status" value="1"/>
</dbReference>
<dbReference type="HAMAP" id="MF_00514">
    <property type="entry name" value="Ribosomal_bL35"/>
    <property type="match status" value="1"/>
</dbReference>
<dbReference type="InterPro" id="IPR001706">
    <property type="entry name" value="Ribosomal_bL35"/>
</dbReference>
<dbReference type="InterPro" id="IPR021137">
    <property type="entry name" value="Ribosomal_bL35-like"/>
</dbReference>
<dbReference type="InterPro" id="IPR018265">
    <property type="entry name" value="Ribosomal_bL35_CS"/>
</dbReference>
<dbReference type="InterPro" id="IPR037229">
    <property type="entry name" value="Ribosomal_bL35_sf"/>
</dbReference>
<dbReference type="NCBIfam" id="TIGR00001">
    <property type="entry name" value="rpmI_bact"/>
    <property type="match status" value="1"/>
</dbReference>
<dbReference type="PANTHER" id="PTHR33343">
    <property type="entry name" value="54S RIBOSOMAL PROTEIN BL35M"/>
    <property type="match status" value="1"/>
</dbReference>
<dbReference type="PANTHER" id="PTHR33343:SF1">
    <property type="entry name" value="LARGE RIBOSOMAL SUBUNIT PROTEIN BL35M"/>
    <property type="match status" value="1"/>
</dbReference>
<dbReference type="Pfam" id="PF01632">
    <property type="entry name" value="Ribosomal_L35p"/>
    <property type="match status" value="1"/>
</dbReference>
<dbReference type="PRINTS" id="PR00064">
    <property type="entry name" value="RIBOSOMALL35"/>
</dbReference>
<dbReference type="SUPFAM" id="SSF143034">
    <property type="entry name" value="L35p-like"/>
    <property type="match status" value="1"/>
</dbReference>
<dbReference type="PROSITE" id="PS00936">
    <property type="entry name" value="RIBOSOMAL_L35"/>
    <property type="match status" value="1"/>
</dbReference>
<organism>
    <name type="scientific">Lactobacillus gasseri (strain ATCC 33323 / DSM 20243 / BCRC 14619 / CIP 102991 / JCM 1131 / KCTC 3163 / NCIMB 11718 / NCTC 13722 / AM63)</name>
    <dbReference type="NCBI Taxonomy" id="324831"/>
    <lineage>
        <taxon>Bacteria</taxon>
        <taxon>Bacillati</taxon>
        <taxon>Bacillota</taxon>
        <taxon>Bacilli</taxon>
        <taxon>Lactobacillales</taxon>
        <taxon>Lactobacillaceae</taxon>
        <taxon>Lactobacillus</taxon>
    </lineage>
</organism>
<protein>
    <recommendedName>
        <fullName evidence="1">Large ribosomal subunit protein bL35</fullName>
    </recommendedName>
    <alternativeName>
        <fullName evidence="3">50S ribosomal protein L35</fullName>
    </alternativeName>
</protein>
<reference key="1">
    <citation type="journal article" date="2006" name="Proc. Natl. Acad. Sci. U.S.A.">
        <title>Comparative genomics of the lactic acid bacteria.</title>
        <authorList>
            <person name="Makarova K.S."/>
            <person name="Slesarev A."/>
            <person name="Wolf Y.I."/>
            <person name="Sorokin A."/>
            <person name="Mirkin B."/>
            <person name="Koonin E.V."/>
            <person name="Pavlov A."/>
            <person name="Pavlova N."/>
            <person name="Karamychev V."/>
            <person name="Polouchine N."/>
            <person name="Shakhova V."/>
            <person name="Grigoriev I."/>
            <person name="Lou Y."/>
            <person name="Rohksar D."/>
            <person name="Lucas S."/>
            <person name="Huang K."/>
            <person name="Goodstein D.M."/>
            <person name="Hawkins T."/>
            <person name="Plengvidhya V."/>
            <person name="Welker D."/>
            <person name="Hughes J."/>
            <person name="Goh Y."/>
            <person name="Benson A."/>
            <person name="Baldwin K."/>
            <person name="Lee J.-H."/>
            <person name="Diaz-Muniz I."/>
            <person name="Dosti B."/>
            <person name="Smeianov V."/>
            <person name="Wechter W."/>
            <person name="Barabote R."/>
            <person name="Lorca G."/>
            <person name="Altermann E."/>
            <person name="Barrangou R."/>
            <person name="Ganesan B."/>
            <person name="Xie Y."/>
            <person name="Rawsthorne H."/>
            <person name="Tamir D."/>
            <person name="Parker C."/>
            <person name="Breidt F."/>
            <person name="Broadbent J.R."/>
            <person name="Hutkins R."/>
            <person name="O'Sullivan D."/>
            <person name="Steele J."/>
            <person name="Unlu G."/>
            <person name="Saier M.H. Jr."/>
            <person name="Klaenhammer T."/>
            <person name="Richardson P."/>
            <person name="Kozyavkin S."/>
            <person name="Weimer B.C."/>
            <person name="Mills D.A."/>
        </authorList>
    </citation>
    <scope>NUCLEOTIDE SEQUENCE [LARGE SCALE GENOMIC DNA]</scope>
    <source>
        <strain>ATCC 33323 / DSM 20243 / BCRC 14619 / CIP 102991 / JCM 1131 / KCTC 3163 / NCIMB 11718 / NCTC 13722 / AM63</strain>
    </source>
</reference>
<evidence type="ECO:0000255" key="1">
    <source>
        <dbReference type="HAMAP-Rule" id="MF_00514"/>
    </source>
</evidence>
<evidence type="ECO:0000256" key="2">
    <source>
        <dbReference type="SAM" id="MobiDB-lite"/>
    </source>
</evidence>
<evidence type="ECO:0000305" key="3"/>